<reference key="1">
    <citation type="journal article" date="2018" name="Front. Microbiol.">
        <title>Heterologous production of a novel cyclic peptide compound, KK-1, in Aspergillus oryzae.</title>
        <authorList>
            <person name="Yoshimi A."/>
            <person name="Yamaguchi S."/>
            <person name="Fujioka T."/>
            <person name="Kawai K."/>
            <person name="Gomi K."/>
            <person name="Machida M."/>
            <person name="Abe K."/>
        </authorList>
    </citation>
    <scope>NUCLEOTIDE SEQUENCE [GENOMIC DNA]</scope>
    <scope>FUNCTION</scope>
    <scope>PATHWAY</scope>
    <source>
        <strain>BAUA-2787</strain>
    </source>
</reference>
<reference key="2">
    <citation type="journal article" date="2022" name="Front. Fungal Biol.">
        <title>Discovery of a gene cluster for the biosynthesis of novel cyclic peptide compound, KK-1, in Curvularia clavata.</title>
        <authorList>
            <person name="Yamaguchi S."/>
            <person name="Fujioka T."/>
            <person name="Yoshimi A."/>
            <person name="Kumagai T."/>
            <person name="Umemura M."/>
            <person name="Abe K."/>
            <person name="Machida M."/>
            <person name="Kawai K."/>
        </authorList>
    </citation>
    <scope>FUNCTION</scope>
    <scope>DISRUPTION PHENOTYPE</scope>
    <scope>PATHWAY</scope>
</reference>
<gene>
    <name evidence="6" type="primary">kk1F</name>
    <name evidence="5" type="synonym">kkR</name>
    <name evidence="5" type="synonym">TR05</name>
    <name type="ORF">TRAF068005</name>
</gene>
<protein>
    <recommendedName>
        <fullName evidence="6">Transcription factor kk1f</fullName>
    </recommendedName>
    <alternativeName>
        <fullName evidence="6">KK-1 biosynthesis cluster protein F</fullName>
    </alternativeName>
    <alternativeName>
        <fullName evidence="5">KK-1 biosynthesis cluster regulator</fullName>
    </alternativeName>
</protein>
<dbReference type="EMBL" id="LC371755">
    <property type="protein sequence ID" value="BBC83961.1"/>
    <property type="molecule type" value="Genomic_DNA"/>
</dbReference>
<dbReference type="SMR" id="A0A348AXX8"/>
<dbReference type="VEuPathDB" id="FungiDB:yc1106_06627"/>
<dbReference type="GO" id="GO:0005634">
    <property type="term" value="C:nucleus"/>
    <property type="evidence" value="ECO:0007669"/>
    <property type="project" value="UniProtKB-SubCell"/>
</dbReference>
<dbReference type="GO" id="GO:0003677">
    <property type="term" value="F:DNA binding"/>
    <property type="evidence" value="ECO:0007669"/>
    <property type="project" value="UniProtKB-KW"/>
</dbReference>
<keyword id="KW-0238">DNA-binding</keyword>
<keyword id="KW-0539">Nucleus</keyword>
<keyword id="KW-0804">Transcription</keyword>
<keyword id="KW-0805">Transcription regulation</keyword>
<feature type="chain" id="PRO_0000450432" description="Transcription factor kk1f">
    <location>
        <begin position="1"/>
        <end position="398"/>
    </location>
</feature>
<feature type="domain" description="bZIP" evidence="1">
    <location>
        <begin position="31"/>
        <end position="62"/>
    </location>
</feature>
<feature type="region of interest" description="Disordered" evidence="2">
    <location>
        <begin position="1"/>
        <end position="28"/>
    </location>
</feature>
<feature type="region of interest" description="Basic motif" evidence="1">
    <location>
        <begin position="34"/>
        <end position="50"/>
    </location>
</feature>
<feature type="region of interest" description="Leucine-zipper" evidence="1">
    <location>
        <begin position="51"/>
        <end position="58"/>
    </location>
</feature>
<accession>A0A348AXX8</accession>
<name>KK1F_CURCL</name>
<organism>
    <name type="scientific">Curvularia clavata</name>
    <dbReference type="NCBI Taxonomy" id="95742"/>
    <lineage>
        <taxon>Eukaryota</taxon>
        <taxon>Fungi</taxon>
        <taxon>Dikarya</taxon>
        <taxon>Ascomycota</taxon>
        <taxon>Pezizomycotina</taxon>
        <taxon>Dothideomycetes</taxon>
        <taxon>Pleosporomycetidae</taxon>
        <taxon>Pleosporales</taxon>
        <taxon>Pleosporineae</taxon>
        <taxon>Pleosporaceae</taxon>
        <taxon>Curvularia</taxon>
    </lineage>
</organism>
<proteinExistence type="inferred from homology"/>
<comment type="function">
    <text evidence="3 4">Transcription factor; part of the gene cluster that mediates the biosynthesis of KK-1, a novel cyclic depsipeptide with 10 residues which is a promising active compound with high activity against many plant pathogens, especially Botrytis cinerea (PubMed:29686660, PubMed:37746209). Positively regulates the expression of all the genes from the KK-1 biosynthesis gene cluster (PubMed:37746209).</text>
</comment>
<comment type="pathway">
    <text evidence="3 4">Secondary metabolite biosynthesis.</text>
</comment>
<comment type="subcellular location">
    <subcellularLocation>
        <location evidence="7">Nucleus</location>
    </subcellularLocation>
</comment>
<comment type="disruption phenotype">
    <text evidence="4">Decreases the expression of the entire KK-1 biosynthesis cluster genes and almost eliminates KK-1 production.</text>
</comment>
<comment type="similarity">
    <text evidence="7">Belongs to the bZIP family.</text>
</comment>
<evidence type="ECO:0000255" key="1">
    <source>
        <dbReference type="PROSITE-ProRule" id="PRU00978"/>
    </source>
</evidence>
<evidence type="ECO:0000256" key="2">
    <source>
        <dbReference type="SAM" id="MobiDB-lite"/>
    </source>
</evidence>
<evidence type="ECO:0000269" key="3">
    <source>
    </source>
</evidence>
<evidence type="ECO:0000269" key="4">
    <source>
    </source>
</evidence>
<evidence type="ECO:0000303" key="5">
    <source>
    </source>
</evidence>
<evidence type="ECO:0000303" key="6">
    <source>
    </source>
</evidence>
<evidence type="ECO:0000305" key="7"/>
<sequence>MTFVETVAVPDNEERPSAGHNRPVADSTKCPNAREMKVQNRVAQRTHHRRLKTKLEVLRERLKEPEKQVGEPARVQTSTSTLVSDAATSLADSMCLVPAVQNDQAMAFDFLMTPSPSVGNDCPSNDLETMRQAASVHSNTLGGAFPLNRSPCTENMTPESQVSLSTAPLCFTSVVPAELDMDAFCTLDSSDWSRPNEESLLRLANYSTSVSPTNVQWGVDENAPLQDRVRYMRDQAVAMGFGSLDDVVEAHYTQKLECTSPSFQEQRLSRNRRLSRLLSTLHNAAKDWSEWERRGLQEQVTQGAEDILVSELNSYITQRSMNSTDDKIITGGLLDEQSRLRQDVEERRRLQDSLPNLGALLTTLLSRSNAPNQDARRDTVLAMIKTMCFDQDENMSIS</sequence>